<gene>
    <name type="primary">PDF1B</name>
</gene>
<reference key="1">
    <citation type="journal article" date="2000" name="EMBO J.">
        <title>Identification of eukaryotic peptide deformylases reveals universality of N-terminal protein processing mechanisms.</title>
        <authorList>
            <person name="Giglione C."/>
            <person name="Serero A."/>
            <person name="Pierre M."/>
            <person name="Boisson B."/>
            <person name="Meinnel T."/>
        </authorList>
    </citation>
    <scope>NUCLEOTIDE SEQUENCE [MRNA]</scope>
</reference>
<evidence type="ECO:0000250" key="1"/>
<evidence type="ECO:0000255" key="2"/>
<evidence type="ECO:0000305" key="3"/>
<accession>Q9FV54</accession>
<sequence length="279" mass="31197">MAMAAASWASSSSFTRFLRPLLSRNSSPSPISYSLHRYKSANCLFFSASSNKPPKLAVYAQARRVLSSKTKGDEIATPADLSFVVPLKIVEYPDPILRAKNKRIDNFDANLKKLVDEMFDIMYKTDGIGLSAPQVGMNVQLMVFNAAGERGEGEEIVLVNPRVSRYSRRIIPYEEGCLSFPMIHGDVKRPESVKVDAQDINGTRFEISLSALPARVFQHEFDHLQGVLFFDKMTDEVLDTIREKLVALEKKYEDRTGLPTPESINTRKIKKAAVGFGKS</sequence>
<proteinExistence type="evidence at transcript level"/>
<protein>
    <recommendedName>
        <fullName>Peptide deformylase 1B, chloroplastic</fullName>
        <shortName>PDF 1B</shortName>
        <ecNumber>3.5.1.88</ecNumber>
    </recommendedName>
    <alternativeName>
        <fullName>Polypeptide deformylase</fullName>
    </alternativeName>
</protein>
<name>DEF1B_SOLLC</name>
<keyword id="KW-0150">Chloroplast</keyword>
<keyword id="KW-0378">Hydrolase</keyword>
<keyword id="KW-0408">Iron</keyword>
<keyword id="KW-0479">Metal-binding</keyword>
<keyword id="KW-0934">Plastid</keyword>
<keyword id="KW-0648">Protein biosynthesis</keyword>
<keyword id="KW-1185">Reference proteome</keyword>
<keyword id="KW-0809">Transit peptide</keyword>
<comment type="function">
    <text evidence="1">Removes the formyl group from the N-terminal Met of newly synthesized proteins.</text>
</comment>
<comment type="catalytic activity">
    <reaction>
        <text>N-terminal N-formyl-L-methionyl-[peptide] + H2O = N-terminal L-methionyl-[peptide] + formate</text>
        <dbReference type="Rhea" id="RHEA:24420"/>
        <dbReference type="Rhea" id="RHEA-COMP:10639"/>
        <dbReference type="Rhea" id="RHEA-COMP:10640"/>
        <dbReference type="ChEBI" id="CHEBI:15377"/>
        <dbReference type="ChEBI" id="CHEBI:15740"/>
        <dbReference type="ChEBI" id="CHEBI:49298"/>
        <dbReference type="ChEBI" id="CHEBI:64731"/>
        <dbReference type="EC" id="3.5.1.88"/>
    </reaction>
</comment>
<comment type="cofactor">
    <cofactor evidence="1">
        <name>Fe(2+)</name>
        <dbReference type="ChEBI" id="CHEBI:29033"/>
    </cofactor>
    <text evidence="1">Binds 1 Fe(2+) ion.</text>
</comment>
<comment type="subcellular location">
    <subcellularLocation>
        <location evidence="3">Plastid</location>
        <location evidence="3">Chloroplast</location>
    </subcellularLocation>
</comment>
<comment type="similarity">
    <text evidence="3">Belongs to the polypeptide deformylase family.</text>
</comment>
<dbReference type="EC" id="3.5.1.88"/>
<dbReference type="EMBL" id="AF250958">
    <property type="protein sequence ID" value="AAG33972.1"/>
    <property type="molecule type" value="mRNA"/>
</dbReference>
<dbReference type="RefSeq" id="NP_001234441.1">
    <property type="nucleotide sequence ID" value="NM_001247512.2"/>
</dbReference>
<dbReference type="SMR" id="Q9FV54"/>
<dbReference type="FunCoup" id="Q9FV54">
    <property type="interactions" value="787"/>
</dbReference>
<dbReference type="STRING" id="4081.Q9FV54"/>
<dbReference type="PaxDb" id="4081-Solyc02g086680.2.1"/>
<dbReference type="GeneID" id="543648"/>
<dbReference type="KEGG" id="sly:543648"/>
<dbReference type="eggNOG" id="KOG3137">
    <property type="taxonomic scope" value="Eukaryota"/>
</dbReference>
<dbReference type="HOGENOM" id="CLU_061901_0_1_1"/>
<dbReference type="InParanoid" id="Q9FV54"/>
<dbReference type="OrthoDB" id="276063at2759"/>
<dbReference type="PhylomeDB" id="Q9FV54"/>
<dbReference type="SABIO-RK" id="Q9FV54"/>
<dbReference type="Proteomes" id="UP000004994">
    <property type="component" value="Unplaced"/>
</dbReference>
<dbReference type="GO" id="GO:0009507">
    <property type="term" value="C:chloroplast"/>
    <property type="evidence" value="ECO:0007669"/>
    <property type="project" value="UniProtKB-SubCell"/>
</dbReference>
<dbReference type="GO" id="GO:0046872">
    <property type="term" value="F:metal ion binding"/>
    <property type="evidence" value="ECO:0007669"/>
    <property type="project" value="UniProtKB-KW"/>
</dbReference>
<dbReference type="GO" id="GO:0042586">
    <property type="term" value="F:peptide deformylase activity"/>
    <property type="evidence" value="ECO:0007669"/>
    <property type="project" value="UniProtKB-EC"/>
</dbReference>
<dbReference type="GO" id="GO:0006412">
    <property type="term" value="P:translation"/>
    <property type="evidence" value="ECO:0007669"/>
    <property type="project" value="UniProtKB-KW"/>
</dbReference>
<dbReference type="CDD" id="cd00487">
    <property type="entry name" value="Pep_deformylase"/>
    <property type="match status" value="1"/>
</dbReference>
<dbReference type="FunFam" id="3.90.45.10:FF:000006">
    <property type="entry name" value="Peptide deformylase"/>
    <property type="match status" value="1"/>
</dbReference>
<dbReference type="Gene3D" id="3.90.45.10">
    <property type="entry name" value="Peptide deformylase"/>
    <property type="match status" value="1"/>
</dbReference>
<dbReference type="HAMAP" id="MF_00163">
    <property type="entry name" value="Pep_deformylase"/>
    <property type="match status" value="1"/>
</dbReference>
<dbReference type="InterPro" id="IPR023635">
    <property type="entry name" value="Peptide_deformylase"/>
</dbReference>
<dbReference type="InterPro" id="IPR036821">
    <property type="entry name" value="Peptide_deformylase_sf"/>
</dbReference>
<dbReference type="NCBIfam" id="TIGR00079">
    <property type="entry name" value="pept_deformyl"/>
    <property type="match status" value="1"/>
</dbReference>
<dbReference type="NCBIfam" id="NF001159">
    <property type="entry name" value="PRK00150.1-3"/>
    <property type="match status" value="1"/>
</dbReference>
<dbReference type="PANTHER" id="PTHR10458">
    <property type="entry name" value="PEPTIDE DEFORMYLASE"/>
    <property type="match status" value="1"/>
</dbReference>
<dbReference type="PANTHER" id="PTHR10458:SF22">
    <property type="entry name" value="PEPTIDE DEFORMYLASE"/>
    <property type="match status" value="1"/>
</dbReference>
<dbReference type="Pfam" id="PF01327">
    <property type="entry name" value="Pep_deformylase"/>
    <property type="match status" value="1"/>
</dbReference>
<dbReference type="PRINTS" id="PR01576">
    <property type="entry name" value="PDEFORMYLASE"/>
</dbReference>
<dbReference type="SUPFAM" id="SSF56420">
    <property type="entry name" value="Peptide deformylase"/>
    <property type="match status" value="1"/>
</dbReference>
<organism>
    <name type="scientific">Solanum lycopersicum</name>
    <name type="common">Tomato</name>
    <name type="synonym">Lycopersicon esculentum</name>
    <dbReference type="NCBI Taxonomy" id="4081"/>
    <lineage>
        <taxon>Eukaryota</taxon>
        <taxon>Viridiplantae</taxon>
        <taxon>Streptophyta</taxon>
        <taxon>Embryophyta</taxon>
        <taxon>Tracheophyta</taxon>
        <taxon>Spermatophyta</taxon>
        <taxon>Magnoliopsida</taxon>
        <taxon>eudicotyledons</taxon>
        <taxon>Gunneridae</taxon>
        <taxon>Pentapetalae</taxon>
        <taxon>asterids</taxon>
        <taxon>lamiids</taxon>
        <taxon>Solanales</taxon>
        <taxon>Solanaceae</taxon>
        <taxon>Solanoideae</taxon>
        <taxon>Solaneae</taxon>
        <taxon>Solanum</taxon>
        <taxon>Solanum subgen. Lycopersicon</taxon>
    </lineage>
</organism>
<feature type="transit peptide" description="Chloroplast" evidence="2">
    <location>
        <begin position="1"/>
        <end status="unknown"/>
    </location>
</feature>
<feature type="chain" id="PRO_0000006733" description="Peptide deformylase 1B, chloroplastic">
    <location>
        <begin status="unknown"/>
        <end position="279"/>
    </location>
</feature>
<feature type="active site" evidence="1">
    <location>
        <position position="220"/>
    </location>
</feature>
<feature type="binding site" evidence="1">
    <location>
        <position position="177"/>
    </location>
    <ligand>
        <name>Fe cation</name>
        <dbReference type="ChEBI" id="CHEBI:24875"/>
    </ligand>
</feature>
<feature type="binding site" evidence="1">
    <location>
        <position position="219"/>
    </location>
    <ligand>
        <name>Fe cation</name>
        <dbReference type="ChEBI" id="CHEBI:24875"/>
    </ligand>
</feature>
<feature type="binding site" evidence="1">
    <location>
        <position position="223"/>
    </location>
    <ligand>
        <name>Fe cation</name>
        <dbReference type="ChEBI" id="CHEBI:24875"/>
    </ligand>
</feature>